<protein>
    <recommendedName>
        <fullName>Profilin-1</fullName>
    </recommendedName>
    <alternativeName>
        <fullName>Pollen allergen Ole e 2</fullName>
    </alternativeName>
    <allergenName>Ole e 2</allergenName>
</protein>
<accession>P0DKF3</accession>
<accession>A4GD57</accession>
<sequence>MSWQAYVDDHLMCDIEGHEGHRLTAAAIVGHDGSVWAQSATFPQFKPEEMNGIMTDFNEPGHLAPTGLHLGGTKYMVIQGEAGAVIRGKKGSGGITIKKTGQALVCGIYEEPVTPGQCNMVVERLGDYLLEQGL</sequence>
<evidence type="ECO:0000250" key="1"/>
<evidence type="ECO:0000305" key="2"/>
<keyword id="KW-0009">Actin-binding</keyword>
<keyword id="KW-0020">Allergen</keyword>
<keyword id="KW-0963">Cytoplasm</keyword>
<keyword id="KW-0206">Cytoskeleton</keyword>
<keyword id="KW-1015">Disulfide bond</keyword>
<keyword id="KW-0597">Phosphoprotein</keyword>
<proteinExistence type="evidence at protein level"/>
<organism>
    <name type="scientific">Olea europaea</name>
    <name type="common">Common olive</name>
    <dbReference type="NCBI Taxonomy" id="4146"/>
    <lineage>
        <taxon>Eukaryota</taxon>
        <taxon>Viridiplantae</taxon>
        <taxon>Streptophyta</taxon>
        <taxon>Embryophyta</taxon>
        <taxon>Tracheophyta</taxon>
        <taxon>Spermatophyta</taxon>
        <taxon>Magnoliopsida</taxon>
        <taxon>eudicotyledons</taxon>
        <taxon>Gunneridae</taxon>
        <taxon>Pentapetalae</taxon>
        <taxon>asterids</taxon>
        <taxon>lamiids</taxon>
        <taxon>Lamiales</taxon>
        <taxon>Oleaceae</taxon>
        <taxon>Oleeae</taxon>
        <taxon>Olea</taxon>
    </lineage>
</organism>
<name>PROAI_OLEEU</name>
<comment type="function">
    <text evidence="1">Binds to actin and affects the structure of the cytoskeleton. At high concentrations, profilin prevents the polymerization of actin, whereas it enhances it at low concentrations (By similarity).</text>
</comment>
<comment type="subunit">
    <text evidence="1">Occurs in many kinds of cells as a complex with monomeric actin in a 1:1 ratio.</text>
</comment>
<comment type="subcellular location">
    <subcellularLocation>
        <location evidence="1">Cytoplasm</location>
        <location evidence="1">Cytoskeleton</location>
    </subcellularLocation>
</comment>
<comment type="PTM">
    <text evidence="1">Phosphorylated by MAP kinases.</text>
</comment>
<comment type="polymorphism">
    <text>Several isoforms of the allergen exist due to polymorphism.</text>
</comment>
<comment type="allergen">
    <text>Causes an allergic reaction in human.</text>
</comment>
<comment type="similarity">
    <text evidence="2">Belongs to the profilin family.</text>
</comment>
<dbReference type="EMBL" id="EF541378">
    <property type="protein sequence ID" value="ABP58624.1"/>
    <property type="molecule type" value="mRNA"/>
</dbReference>
<dbReference type="SMR" id="P0DKF3"/>
<dbReference type="GO" id="GO:0005938">
    <property type="term" value="C:cell cortex"/>
    <property type="evidence" value="ECO:0007669"/>
    <property type="project" value="TreeGrafter"/>
</dbReference>
<dbReference type="GO" id="GO:0005856">
    <property type="term" value="C:cytoskeleton"/>
    <property type="evidence" value="ECO:0007669"/>
    <property type="project" value="UniProtKB-SubCell"/>
</dbReference>
<dbReference type="GO" id="GO:0003785">
    <property type="term" value="F:actin monomer binding"/>
    <property type="evidence" value="ECO:0007669"/>
    <property type="project" value="TreeGrafter"/>
</dbReference>
<dbReference type="CDD" id="cd00148">
    <property type="entry name" value="PROF"/>
    <property type="match status" value="1"/>
</dbReference>
<dbReference type="FunFam" id="3.30.450.30:FF:000001">
    <property type="entry name" value="Profilin"/>
    <property type="match status" value="1"/>
</dbReference>
<dbReference type="Gene3D" id="3.30.450.30">
    <property type="entry name" value="Dynein light chain 2a, cytoplasmic"/>
    <property type="match status" value="1"/>
</dbReference>
<dbReference type="InterPro" id="IPR048278">
    <property type="entry name" value="PFN"/>
</dbReference>
<dbReference type="InterPro" id="IPR005455">
    <property type="entry name" value="PFN_euk"/>
</dbReference>
<dbReference type="InterPro" id="IPR036140">
    <property type="entry name" value="PFN_sf"/>
</dbReference>
<dbReference type="InterPro" id="IPR027310">
    <property type="entry name" value="Profilin_CS"/>
</dbReference>
<dbReference type="PANTHER" id="PTHR11604">
    <property type="entry name" value="PROFILIN"/>
    <property type="match status" value="1"/>
</dbReference>
<dbReference type="PANTHER" id="PTHR11604:SF25">
    <property type="entry name" value="PROFILIN-5"/>
    <property type="match status" value="1"/>
</dbReference>
<dbReference type="Pfam" id="PF00235">
    <property type="entry name" value="Profilin"/>
    <property type="match status" value="1"/>
</dbReference>
<dbReference type="PRINTS" id="PR00392">
    <property type="entry name" value="PROFILIN"/>
</dbReference>
<dbReference type="PRINTS" id="PR01640">
    <property type="entry name" value="PROFILINPLNT"/>
</dbReference>
<dbReference type="SMART" id="SM00392">
    <property type="entry name" value="PROF"/>
    <property type="match status" value="1"/>
</dbReference>
<dbReference type="SUPFAM" id="SSF55770">
    <property type="entry name" value="Profilin (actin-binding protein)"/>
    <property type="match status" value="1"/>
</dbReference>
<dbReference type="PROSITE" id="PS00414">
    <property type="entry name" value="PROFILIN"/>
    <property type="match status" value="1"/>
</dbReference>
<reference key="1">
    <citation type="submission" date="2007-03" db="EMBL/GenBank/DDBJ databases">
        <title>Isoforms of pollen allergens in two widespread olive cultivars from Iran.</title>
        <authorList>
            <person name="Soleimani A."/>
            <person name="Jimenez-Lopez J.C."/>
            <person name="Rodriguez-Garcia M.I."/>
            <person name="Alche J."/>
        </authorList>
    </citation>
    <scope>NUCLEOTIDE SEQUENCE [MRNA]</scope>
    <source>
        <strain>cv. Rowghani</strain>
    </source>
</reference>
<feature type="initiator methionine" description="Removed" evidence="1">
    <location>
        <position position="1"/>
    </location>
</feature>
<feature type="chain" id="PRO_0000425000" description="Profilin-1">
    <location>
        <begin position="2"/>
        <end position="134"/>
    </location>
</feature>
<feature type="short sequence motif" description="Involved in PIP2 interaction">
    <location>
        <begin position="84"/>
        <end position="100"/>
    </location>
</feature>
<feature type="modified residue" description="Phosphothreonine" evidence="1">
    <location>
        <position position="114"/>
    </location>
</feature>
<feature type="disulfide bond" evidence="2">
    <location>
        <begin position="13"/>
        <end position="118"/>
    </location>
</feature>